<sequence>MTATLERREGVSLWERFCAWITSTENRLYIGWFGCLMFPTLLTATSCYIIAFIAAPPVDIDGIREPVAGSLLYGNNIISGAVIPSSNAIGMHFYPIWEAASIDEWLYNGGPYQLIVLHFLLGVASYMGREWELSYRLGMRPWIFVAFSAPVAAASAVFLVYPIGQGSFSDGMPLGISGTFNFMLVFQAEHNILMHPFHMAGVAGVFGGSLFSAMHGSLVTSSLIRETTENESTNYGYKFGQEEETYNIVAAHGYFGRLIFQYASFNNSRALHFFLAAWPVVGIWLTAMGVSTMAFNLNGFNFNQSVVDSQGRVINTWADIINRADLGMEVMHERNAHNFPLDLASGDVLPVALNAPAVNG</sequence>
<gene>
    <name evidence="1" type="primary">psbA</name>
</gene>
<name>PSBA_TRICV</name>
<organism>
    <name type="scientific">Trieres chinensis</name>
    <name type="common">Marine centric diatom</name>
    <name type="synonym">Odontella sinensis</name>
    <dbReference type="NCBI Taxonomy" id="1514140"/>
    <lineage>
        <taxon>Eukaryota</taxon>
        <taxon>Sar</taxon>
        <taxon>Stramenopiles</taxon>
        <taxon>Ochrophyta</taxon>
        <taxon>Bacillariophyta</taxon>
        <taxon>Mediophyceae</taxon>
        <taxon>Biddulphiophycidae</taxon>
        <taxon>Eupodiscales</taxon>
        <taxon>Parodontellaceae</taxon>
        <taxon>Trieres</taxon>
    </lineage>
</organism>
<accession>P49460</accession>
<proteinExistence type="inferred from homology"/>
<dbReference type="EC" id="1.10.3.9" evidence="1"/>
<dbReference type="EMBL" id="Z67753">
    <property type="protein sequence ID" value="CAA91657.1"/>
    <property type="molecule type" value="Genomic_DNA"/>
</dbReference>
<dbReference type="PIR" id="S78284">
    <property type="entry name" value="S78284"/>
</dbReference>
<dbReference type="RefSeq" id="NP_043625.1">
    <property type="nucleotide sequence ID" value="NC_001713.1"/>
</dbReference>
<dbReference type="SMR" id="P49460"/>
<dbReference type="GeneID" id="801785"/>
<dbReference type="GO" id="GO:0009535">
    <property type="term" value="C:chloroplast thylakoid membrane"/>
    <property type="evidence" value="ECO:0007669"/>
    <property type="project" value="UniProtKB-SubCell"/>
</dbReference>
<dbReference type="GO" id="GO:0009523">
    <property type="term" value="C:photosystem II"/>
    <property type="evidence" value="ECO:0007669"/>
    <property type="project" value="UniProtKB-KW"/>
</dbReference>
<dbReference type="GO" id="GO:0016168">
    <property type="term" value="F:chlorophyll binding"/>
    <property type="evidence" value="ECO:0007669"/>
    <property type="project" value="UniProtKB-UniRule"/>
</dbReference>
<dbReference type="GO" id="GO:0045156">
    <property type="term" value="F:electron transporter, transferring electrons within the cyclic electron transport pathway of photosynthesis activity"/>
    <property type="evidence" value="ECO:0007669"/>
    <property type="project" value="InterPro"/>
</dbReference>
<dbReference type="GO" id="GO:0005506">
    <property type="term" value="F:iron ion binding"/>
    <property type="evidence" value="ECO:0007669"/>
    <property type="project" value="UniProtKB-UniRule"/>
</dbReference>
<dbReference type="GO" id="GO:0016682">
    <property type="term" value="F:oxidoreductase activity, acting on diphenols and related substances as donors, oxygen as acceptor"/>
    <property type="evidence" value="ECO:0007669"/>
    <property type="project" value="UniProtKB-UniRule"/>
</dbReference>
<dbReference type="GO" id="GO:0009772">
    <property type="term" value="P:photosynthetic electron transport in photosystem II"/>
    <property type="evidence" value="ECO:0007669"/>
    <property type="project" value="InterPro"/>
</dbReference>
<dbReference type="GO" id="GO:0009635">
    <property type="term" value="P:response to herbicide"/>
    <property type="evidence" value="ECO:0007669"/>
    <property type="project" value="UniProtKB-KW"/>
</dbReference>
<dbReference type="CDD" id="cd09289">
    <property type="entry name" value="Photosystem-II_D1"/>
    <property type="match status" value="1"/>
</dbReference>
<dbReference type="FunFam" id="1.20.85.10:FF:000002">
    <property type="entry name" value="Photosystem II protein D1"/>
    <property type="match status" value="1"/>
</dbReference>
<dbReference type="Gene3D" id="1.20.85.10">
    <property type="entry name" value="Photosystem II protein D1-like"/>
    <property type="match status" value="1"/>
</dbReference>
<dbReference type="HAMAP" id="MF_01379">
    <property type="entry name" value="PSII_PsbA_D1"/>
    <property type="match status" value="1"/>
</dbReference>
<dbReference type="InterPro" id="IPR055266">
    <property type="entry name" value="D1/D2"/>
</dbReference>
<dbReference type="InterPro" id="IPR036854">
    <property type="entry name" value="Photo_II_D1/D2_sf"/>
</dbReference>
<dbReference type="InterPro" id="IPR000484">
    <property type="entry name" value="Photo_RC_L/M"/>
</dbReference>
<dbReference type="InterPro" id="IPR055265">
    <property type="entry name" value="Photo_RC_L/M_CS"/>
</dbReference>
<dbReference type="InterPro" id="IPR005867">
    <property type="entry name" value="PSII_D1"/>
</dbReference>
<dbReference type="NCBIfam" id="TIGR01151">
    <property type="entry name" value="psbA"/>
    <property type="match status" value="1"/>
</dbReference>
<dbReference type="PANTHER" id="PTHR33149:SF12">
    <property type="entry name" value="PHOTOSYSTEM II D2 PROTEIN"/>
    <property type="match status" value="1"/>
</dbReference>
<dbReference type="PANTHER" id="PTHR33149">
    <property type="entry name" value="PHOTOSYSTEM II PROTEIN D1"/>
    <property type="match status" value="1"/>
</dbReference>
<dbReference type="Pfam" id="PF00124">
    <property type="entry name" value="Photo_RC"/>
    <property type="match status" value="1"/>
</dbReference>
<dbReference type="PRINTS" id="PR00256">
    <property type="entry name" value="REACTNCENTRE"/>
</dbReference>
<dbReference type="SUPFAM" id="SSF81483">
    <property type="entry name" value="Bacterial photosystem II reaction centre, L and M subunits"/>
    <property type="match status" value="1"/>
</dbReference>
<dbReference type="PROSITE" id="PS00244">
    <property type="entry name" value="REACTION_CENTER"/>
    <property type="match status" value="1"/>
</dbReference>
<protein>
    <recommendedName>
        <fullName evidence="1">Photosystem II protein D1</fullName>
        <shortName evidence="1">PSII D1 protein</shortName>
        <ecNumber evidence="1">1.10.3.9</ecNumber>
    </recommendedName>
    <alternativeName>
        <fullName evidence="1">Photosystem II Q(B) protein</fullName>
    </alternativeName>
</protein>
<geneLocation type="chloroplast"/>
<evidence type="ECO:0000255" key="1">
    <source>
        <dbReference type="HAMAP-Rule" id="MF_01379"/>
    </source>
</evidence>
<keyword id="KW-0106">Calcium</keyword>
<keyword id="KW-0148">Chlorophyll</keyword>
<keyword id="KW-0150">Chloroplast</keyword>
<keyword id="KW-0157">Chromophore</keyword>
<keyword id="KW-0249">Electron transport</keyword>
<keyword id="KW-0359">Herbicide resistance</keyword>
<keyword id="KW-0408">Iron</keyword>
<keyword id="KW-0460">Magnesium</keyword>
<keyword id="KW-0464">Manganese</keyword>
<keyword id="KW-0472">Membrane</keyword>
<keyword id="KW-0479">Metal-binding</keyword>
<keyword id="KW-0560">Oxidoreductase</keyword>
<keyword id="KW-0602">Photosynthesis</keyword>
<keyword id="KW-0604">Photosystem II</keyword>
<keyword id="KW-0934">Plastid</keyword>
<keyword id="KW-0793">Thylakoid</keyword>
<keyword id="KW-0812">Transmembrane</keyword>
<keyword id="KW-1133">Transmembrane helix</keyword>
<keyword id="KW-0813">Transport</keyword>
<reference key="1">
    <citation type="journal article" date="1995" name="Plant Mol. Biol. Rep.">
        <title>The chloroplast genome of a chlorophyll a+c-containing alga, Odontella sinensis.</title>
        <authorList>
            <person name="Kowallik K.V."/>
            <person name="Stoebe B."/>
            <person name="Schaffran I."/>
            <person name="Kroth-Pancic P."/>
            <person name="Freier U."/>
        </authorList>
    </citation>
    <scope>NUCLEOTIDE SEQUENCE [LARGE SCALE GENOMIC DNA]</scope>
</reference>
<comment type="function">
    <text evidence="1">Photosystem II (PSII) is a light-driven water:plastoquinone oxidoreductase that uses light energy to abstract electrons from H(2)O, generating O(2) and a proton gradient subsequently used for ATP formation. It consists of a core antenna complex that captures photons, and an electron transfer chain that converts photonic excitation into a charge separation. The D1/D2 (PsbA/PsbD) reaction center heterodimer binds P680, the primary electron donor of PSII as well as several subsequent electron acceptors.</text>
</comment>
<comment type="catalytic activity">
    <reaction evidence="1">
        <text>2 a plastoquinone + 4 hnu + 2 H2O = 2 a plastoquinol + O2</text>
        <dbReference type="Rhea" id="RHEA:36359"/>
        <dbReference type="Rhea" id="RHEA-COMP:9561"/>
        <dbReference type="Rhea" id="RHEA-COMP:9562"/>
        <dbReference type="ChEBI" id="CHEBI:15377"/>
        <dbReference type="ChEBI" id="CHEBI:15379"/>
        <dbReference type="ChEBI" id="CHEBI:17757"/>
        <dbReference type="ChEBI" id="CHEBI:30212"/>
        <dbReference type="ChEBI" id="CHEBI:62192"/>
        <dbReference type="EC" id="1.10.3.9"/>
    </reaction>
</comment>
<comment type="cofactor">
    <text evidence="1">The D1/D2 heterodimer binds P680, chlorophylls that are the primary electron donor of PSII, and subsequent electron acceptors. It shares a non-heme iron and each subunit binds pheophytin, quinone, additional chlorophylls, carotenoids and lipids. D1 provides most of the ligands for the Mn4-Ca-O5 cluster of the oxygen-evolving complex (OEC). There is also a Cl(-1) ion associated with D1 and D2, which is required for oxygen evolution. The PSII complex binds additional chlorophylls, carotenoids and specific lipids.</text>
</comment>
<comment type="subunit">
    <text evidence="1">PSII is composed of 1 copy each of membrane proteins PsbA, PsbB, PsbC, PsbD, PsbE, PsbF, PsbH, PsbI, PsbJ, PsbK, PsbL, PsbM, PsbT, PsbX, PsbY, PsbZ, Psb30/Ycf12, at least 3 peripheral proteins of the oxygen-evolving complex and a large number of cofactors. It forms dimeric complexes.</text>
</comment>
<comment type="subcellular location">
    <subcellularLocation>
        <location evidence="1">Plastid</location>
        <location evidence="1">Chloroplast thylakoid membrane</location>
        <topology evidence="1">Multi-pass membrane protein</topology>
    </subcellularLocation>
</comment>
<comment type="PTM">
    <text evidence="1">Tyr-161 forms a radical intermediate that is referred to as redox-active TyrZ, YZ or Y-Z.</text>
</comment>
<comment type="PTM">
    <text evidence="1">C-terminally processed by CTPA; processing is essential to allow assembly of the oxygen-evolving complex and thus photosynthetic growth.</text>
</comment>
<comment type="miscellaneous">
    <text evidence="1">2 of the reaction center chlorophylls (ChlD1 and ChlD2) are entirely coordinated by water.</text>
</comment>
<comment type="miscellaneous">
    <text evidence="1">Herbicides such as atrazine, BNT, diuron or ioxynil bind in the Q(B) binding site and block subsequent electron transfer.</text>
</comment>
<comment type="similarity">
    <text evidence="1">Belongs to the reaction center PufL/M/PsbA/D family.</text>
</comment>
<feature type="chain" id="PRO_0000090456" description="Photosystem II protein D1" evidence="1">
    <location>
        <begin position="1"/>
        <end position="344"/>
    </location>
</feature>
<feature type="propeptide" id="PRO_0000316518" evidence="1">
    <location>
        <begin position="345"/>
        <end position="360"/>
    </location>
</feature>
<feature type="transmembrane region" description="Helical" evidence="1">
    <location>
        <begin position="29"/>
        <end position="46"/>
    </location>
</feature>
<feature type="transmembrane region" description="Helical" evidence="1">
    <location>
        <begin position="118"/>
        <end position="133"/>
    </location>
</feature>
<feature type="transmembrane region" description="Helical" evidence="1">
    <location>
        <begin position="142"/>
        <end position="156"/>
    </location>
</feature>
<feature type="transmembrane region" description="Helical" evidence="1">
    <location>
        <begin position="197"/>
        <end position="218"/>
    </location>
</feature>
<feature type="transmembrane region" description="Helical" evidence="1">
    <location>
        <begin position="274"/>
        <end position="288"/>
    </location>
</feature>
<feature type="binding site" description="axial binding residue" evidence="1">
    <location>
        <position position="118"/>
    </location>
    <ligand>
        <name>chlorophyll a</name>
        <dbReference type="ChEBI" id="CHEBI:58416"/>
        <label>ChlzD1</label>
    </ligand>
    <ligandPart>
        <name>Mg</name>
        <dbReference type="ChEBI" id="CHEBI:25107"/>
    </ligandPart>
</feature>
<feature type="binding site" evidence="1">
    <location>
        <position position="126"/>
    </location>
    <ligand>
        <name>pheophytin a</name>
        <dbReference type="ChEBI" id="CHEBI:136840"/>
        <label>D1</label>
    </ligand>
</feature>
<feature type="binding site" evidence="1">
    <location>
        <position position="170"/>
    </location>
    <ligand>
        <name>[CaMn4O5] cluster</name>
        <dbReference type="ChEBI" id="CHEBI:189552"/>
    </ligand>
</feature>
<feature type="binding site" evidence="1">
    <location>
        <position position="189"/>
    </location>
    <ligand>
        <name>[CaMn4O5] cluster</name>
        <dbReference type="ChEBI" id="CHEBI:189552"/>
    </ligand>
</feature>
<feature type="binding site" description="axial binding residue" evidence="1">
    <location>
        <position position="198"/>
    </location>
    <ligand>
        <name>chlorophyll a</name>
        <dbReference type="ChEBI" id="CHEBI:58416"/>
        <label>PD1</label>
    </ligand>
    <ligandPart>
        <name>Mg</name>
        <dbReference type="ChEBI" id="CHEBI:25107"/>
    </ligandPart>
</feature>
<feature type="binding site" evidence="1">
    <location>
        <position position="215"/>
    </location>
    <ligand>
        <name>a quinone</name>
        <dbReference type="ChEBI" id="CHEBI:132124"/>
        <label>B</label>
    </ligand>
</feature>
<feature type="binding site" evidence="1">
    <location>
        <position position="215"/>
    </location>
    <ligand>
        <name>Fe cation</name>
        <dbReference type="ChEBI" id="CHEBI:24875"/>
        <note>ligand shared with heterodimeric partner</note>
    </ligand>
</feature>
<feature type="binding site" evidence="1">
    <location>
        <begin position="264"/>
        <end position="265"/>
    </location>
    <ligand>
        <name>a quinone</name>
        <dbReference type="ChEBI" id="CHEBI:132124"/>
        <label>B</label>
    </ligand>
</feature>
<feature type="binding site" evidence="1">
    <location>
        <position position="272"/>
    </location>
    <ligand>
        <name>Fe cation</name>
        <dbReference type="ChEBI" id="CHEBI:24875"/>
        <note>ligand shared with heterodimeric partner</note>
    </ligand>
</feature>
<feature type="binding site" evidence="1">
    <location>
        <position position="332"/>
    </location>
    <ligand>
        <name>[CaMn4O5] cluster</name>
        <dbReference type="ChEBI" id="CHEBI:189552"/>
    </ligand>
</feature>
<feature type="binding site" evidence="1">
    <location>
        <position position="333"/>
    </location>
    <ligand>
        <name>[CaMn4O5] cluster</name>
        <dbReference type="ChEBI" id="CHEBI:189552"/>
    </ligand>
</feature>
<feature type="binding site" evidence="1">
    <location>
        <position position="342"/>
    </location>
    <ligand>
        <name>[CaMn4O5] cluster</name>
        <dbReference type="ChEBI" id="CHEBI:189552"/>
    </ligand>
</feature>
<feature type="binding site" evidence="1">
    <location>
        <position position="344"/>
    </location>
    <ligand>
        <name>[CaMn4O5] cluster</name>
        <dbReference type="ChEBI" id="CHEBI:189552"/>
    </ligand>
</feature>
<feature type="site" description="Tyrosine radical intermediate" evidence="1">
    <location>
        <position position="161"/>
    </location>
</feature>
<feature type="site" description="Stabilizes free radical intermediate" evidence="1">
    <location>
        <position position="190"/>
    </location>
</feature>
<feature type="site" description="Cleavage; by CTPA" evidence="1">
    <location>
        <begin position="344"/>
        <end position="345"/>
    </location>
</feature>